<reference key="1">
    <citation type="journal article" date="2004" name="Nat. Genet.">
        <title>Comparison of genome degradation in Paratyphi A and Typhi, human-restricted serovars of Salmonella enterica that cause typhoid.</title>
        <authorList>
            <person name="McClelland M."/>
            <person name="Sanderson K.E."/>
            <person name="Clifton S.W."/>
            <person name="Latreille P."/>
            <person name="Porwollik S."/>
            <person name="Sabo A."/>
            <person name="Meyer R."/>
            <person name="Bieri T."/>
            <person name="Ozersky P."/>
            <person name="McLellan M."/>
            <person name="Harkins C.R."/>
            <person name="Wang C."/>
            <person name="Nguyen C."/>
            <person name="Berghoff A."/>
            <person name="Elliott G."/>
            <person name="Kohlberg S."/>
            <person name="Strong C."/>
            <person name="Du F."/>
            <person name="Carter J."/>
            <person name="Kremizki C."/>
            <person name="Layman D."/>
            <person name="Leonard S."/>
            <person name="Sun H."/>
            <person name="Fulton L."/>
            <person name="Nash W."/>
            <person name="Miner T."/>
            <person name="Minx P."/>
            <person name="Delehaunty K."/>
            <person name="Fronick C."/>
            <person name="Magrini V."/>
            <person name="Nhan M."/>
            <person name="Warren W."/>
            <person name="Florea L."/>
            <person name="Spieth J."/>
            <person name="Wilson R.K."/>
        </authorList>
    </citation>
    <scope>NUCLEOTIDE SEQUENCE [LARGE SCALE GENOMIC DNA]</scope>
    <source>
        <strain>ATCC 9150 / SARB42</strain>
    </source>
</reference>
<dbReference type="EC" id="6.1.1.17" evidence="1"/>
<dbReference type="EMBL" id="CP000026">
    <property type="protein sequence ID" value="AAV76453.1"/>
    <property type="molecule type" value="Genomic_DNA"/>
</dbReference>
<dbReference type="RefSeq" id="WP_000695625.1">
    <property type="nucleotide sequence ID" value="NC_006511.1"/>
</dbReference>
<dbReference type="SMR" id="Q5PNE5"/>
<dbReference type="KEGG" id="spt:SPA0446"/>
<dbReference type="HOGENOM" id="CLU_015768_6_0_6"/>
<dbReference type="Proteomes" id="UP000008185">
    <property type="component" value="Chromosome"/>
</dbReference>
<dbReference type="GO" id="GO:0005829">
    <property type="term" value="C:cytosol"/>
    <property type="evidence" value="ECO:0007669"/>
    <property type="project" value="TreeGrafter"/>
</dbReference>
<dbReference type="GO" id="GO:0005524">
    <property type="term" value="F:ATP binding"/>
    <property type="evidence" value="ECO:0007669"/>
    <property type="project" value="UniProtKB-UniRule"/>
</dbReference>
<dbReference type="GO" id="GO:0004818">
    <property type="term" value="F:glutamate-tRNA ligase activity"/>
    <property type="evidence" value="ECO:0007669"/>
    <property type="project" value="UniProtKB-UniRule"/>
</dbReference>
<dbReference type="GO" id="GO:0000049">
    <property type="term" value="F:tRNA binding"/>
    <property type="evidence" value="ECO:0007669"/>
    <property type="project" value="InterPro"/>
</dbReference>
<dbReference type="GO" id="GO:0008270">
    <property type="term" value="F:zinc ion binding"/>
    <property type="evidence" value="ECO:0007669"/>
    <property type="project" value="UniProtKB-UniRule"/>
</dbReference>
<dbReference type="GO" id="GO:0006424">
    <property type="term" value="P:glutamyl-tRNA aminoacylation"/>
    <property type="evidence" value="ECO:0007669"/>
    <property type="project" value="UniProtKB-UniRule"/>
</dbReference>
<dbReference type="CDD" id="cd00808">
    <property type="entry name" value="GluRS_core"/>
    <property type="match status" value="1"/>
</dbReference>
<dbReference type="FunFam" id="1.10.10.350:FF:000001">
    <property type="entry name" value="Glutamate--tRNA ligase"/>
    <property type="match status" value="1"/>
</dbReference>
<dbReference type="FunFam" id="3.40.50.620:FF:000007">
    <property type="entry name" value="Glutamate--tRNA ligase"/>
    <property type="match status" value="1"/>
</dbReference>
<dbReference type="Gene3D" id="1.10.10.350">
    <property type="match status" value="1"/>
</dbReference>
<dbReference type="Gene3D" id="3.40.50.620">
    <property type="entry name" value="HUPs"/>
    <property type="match status" value="1"/>
</dbReference>
<dbReference type="HAMAP" id="MF_00022">
    <property type="entry name" value="Glu_tRNA_synth_type1"/>
    <property type="match status" value="1"/>
</dbReference>
<dbReference type="InterPro" id="IPR045462">
    <property type="entry name" value="aa-tRNA-synth_I_cd-bd"/>
</dbReference>
<dbReference type="InterPro" id="IPR020751">
    <property type="entry name" value="aa-tRNA-synth_I_codon-bd_sub2"/>
</dbReference>
<dbReference type="InterPro" id="IPR001412">
    <property type="entry name" value="aa-tRNA-synth_I_CS"/>
</dbReference>
<dbReference type="InterPro" id="IPR008925">
    <property type="entry name" value="aa_tRNA-synth_I_cd-bd_sf"/>
</dbReference>
<dbReference type="InterPro" id="IPR004527">
    <property type="entry name" value="Glu-tRNA-ligase_bac/mito"/>
</dbReference>
<dbReference type="InterPro" id="IPR000924">
    <property type="entry name" value="Glu/Gln-tRNA-synth"/>
</dbReference>
<dbReference type="InterPro" id="IPR020058">
    <property type="entry name" value="Glu/Gln-tRNA-synth_Ib_cat-dom"/>
</dbReference>
<dbReference type="InterPro" id="IPR049940">
    <property type="entry name" value="GluQ/Sye"/>
</dbReference>
<dbReference type="InterPro" id="IPR033910">
    <property type="entry name" value="GluRS_core"/>
</dbReference>
<dbReference type="InterPro" id="IPR014729">
    <property type="entry name" value="Rossmann-like_a/b/a_fold"/>
</dbReference>
<dbReference type="NCBIfam" id="TIGR00464">
    <property type="entry name" value="gltX_bact"/>
    <property type="match status" value="1"/>
</dbReference>
<dbReference type="PANTHER" id="PTHR43311">
    <property type="entry name" value="GLUTAMATE--TRNA LIGASE"/>
    <property type="match status" value="1"/>
</dbReference>
<dbReference type="PANTHER" id="PTHR43311:SF2">
    <property type="entry name" value="GLUTAMATE--TRNA LIGASE, MITOCHONDRIAL-RELATED"/>
    <property type="match status" value="1"/>
</dbReference>
<dbReference type="Pfam" id="PF19269">
    <property type="entry name" value="Anticodon_2"/>
    <property type="match status" value="1"/>
</dbReference>
<dbReference type="Pfam" id="PF00749">
    <property type="entry name" value="tRNA-synt_1c"/>
    <property type="match status" value="1"/>
</dbReference>
<dbReference type="PRINTS" id="PR00987">
    <property type="entry name" value="TRNASYNTHGLU"/>
</dbReference>
<dbReference type="SUPFAM" id="SSF48163">
    <property type="entry name" value="An anticodon-binding domain of class I aminoacyl-tRNA synthetases"/>
    <property type="match status" value="1"/>
</dbReference>
<dbReference type="SUPFAM" id="SSF52374">
    <property type="entry name" value="Nucleotidylyl transferase"/>
    <property type="match status" value="1"/>
</dbReference>
<dbReference type="PROSITE" id="PS00178">
    <property type="entry name" value="AA_TRNA_LIGASE_I"/>
    <property type="match status" value="1"/>
</dbReference>
<name>SYE_SALPA</name>
<proteinExistence type="inferred from homology"/>
<accession>Q5PNE5</accession>
<sequence>MKIKTRFAPSPTGYLHVGGARTALYSWLFARHHGGEFVLRIEDTDLERSTPEAIEAIMDGMNWLNLEWDEGPYFQTKRFDRYNAVIDEMLEAGTAYKCYCSKERLEQLREDQMAKGEKPRYDGRCRHSHEHHADDEPCVVRFANPQDGSVIFDDQIRGPIEFSNQELDDLIIRRTDGSPTYNFCVVVDDWDMEITHVIRGEDHINNTPRQINILKALNAPVPMYAHVSMINGDDGKKLSKRHGAVSVMQYRDDGYLPEALLNYLVRLGWSSGDQEIFTREEMIKLFSLGAVSKSASAFNTDKLLWLNHHYINTLAPEYVATHLQWHIEQENIDTRNGPQLAELVKLLGERCKTLKEMSQSCRYFYEDFSEFDADAAKKHLRPVARQPLEVVRDKLSAITDWSAENVHHAIQATADELEVGMGKVGMPLRVAVTGAGQSPALDVTVHAIGKTRSIERINKALGFIAERESQQ</sequence>
<protein>
    <recommendedName>
        <fullName evidence="1">Glutamate--tRNA ligase</fullName>
        <ecNumber evidence="1">6.1.1.17</ecNumber>
    </recommendedName>
    <alternativeName>
        <fullName evidence="1">Glutamyl-tRNA synthetase</fullName>
        <shortName evidence="1">GluRS</shortName>
    </alternativeName>
</protein>
<organism>
    <name type="scientific">Salmonella paratyphi A (strain ATCC 9150 / SARB42)</name>
    <dbReference type="NCBI Taxonomy" id="295319"/>
    <lineage>
        <taxon>Bacteria</taxon>
        <taxon>Pseudomonadati</taxon>
        <taxon>Pseudomonadota</taxon>
        <taxon>Gammaproteobacteria</taxon>
        <taxon>Enterobacterales</taxon>
        <taxon>Enterobacteriaceae</taxon>
        <taxon>Salmonella</taxon>
    </lineage>
</organism>
<feature type="chain" id="PRO_0000119645" description="Glutamate--tRNA ligase">
    <location>
        <begin position="1"/>
        <end position="471"/>
    </location>
</feature>
<feature type="short sequence motif" description="'HIGH' region" evidence="1">
    <location>
        <begin position="9"/>
        <end position="19"/>
    </location>
</feature>
<feature type="short sequence motif" description="'KMSKS' region" evidence="1">
    <location>
        <begin position="237"/>
        <end position="241"/>
    </location>
</feature>
<feature type="binding site" evidence="1">
    <location>
        <position position="98"/>
    </location>
    <ligand>
        <name>Zn(2+)</name>
        <dbReference type="ChEBI" id="CHEBI:29105"/>
    </ligand>
</feature>
<feature type="binding site" evidence="1">
    <location>
        <position position="100"/>
    </location>
    <ligand>
        <name>Zn(2+)</name>
        <dbReference type="ChEBI" id="CHEBI:29105"/>
    </ligand>
</feature>
<feature type="binding site" evidence="1">
    <location>
        <position position="125"/>
    </location>
    <ligand>
        <name>Zn(2+)</name>
        <dbReference type="ChEBI" id="CHEBI:29105"/>
    </ligand>
</feature>
<feature type="binding site" evidence="1">
    <location>
        <position position="127"/>
    </location>
    <ligand>
        <name>Zn(2+)</name>
        <dbReference type="ChEBI" id="CHEBI:29105"/>
    </ligand>
</feature>
<feature type="binding site" evidence="1">
    <location>
        <position position="240"/>
    </location>
    <ligand>
        <name>ATP</name>
        <dbReference type="ChEBI" id="CHEBI:30616"/>
    </ligand>
</feature>
<comment type="function">
    <text evidence="1">Catalyzes the attachment of glutamate to tRNA(Glu) in a two-step reaction: glutamate is first activated by ATP to form Glu-AMP and then transferred to the acceptor end of tRNA(Glu).</text>
</comment>
<comment type="catalytic activity">
    <reaction evidence="1">
        <text>tRNA(Glu) + L-glutamate + ATP = L-glutamyl-tRNA(Glu) + AMP + diphosphate</text>
        <dbReference type="Rhea" id="RHEA:23540"/>
        <dbReference type="Rhea" id="RHEA-COMP:9663"/>
        <dbReference type="Rhea" id="RHEA-COMP:9680"/>
        <dbReference type="ChEBI" id="CHEBI:29985"/>
        <dbReference type="ChEBI" id="CHEBI:30616"/>
        <dbReference type="ChEBI" id="CHEBI:33019"/>
        <dbReference type="ChEBI" id="CHEBI:78442"/>
        <dbReference type="ChEBI" id="CHEBI:78520"/>
        <dbReference type="ChEBI" id="CHEBI:456215"/>
        <dbReference type="EC" id="6.1.1.17"/>
    </reaction>
</comment>
<comment type="cofactor">
    <cofactor evidence="1">
        <name>Zn(2+)</name>
        <dbReference type="ChEBI" id="CHEBI:29105"/>
    </cofactor>
    <text evidence="1">Binds 1 zinc ion per subunit.</text>
</comment>
<comment type="subunit">
    <text evidence="1">Monomer.</text>
</comment>
<comment type="subcellular location">
    <subcellularLocation>
        <location evidence="1">Cytoplasm</location>
    </subcellularLocation>
</comment>
<comment type="similarity">
    <text evidence="1">Belongs to the class-I aminoacyl-tRNA synthetase family. Glutamate--tRNA ligase type 1 subfamily.</text>
</comment>
<keyword id="KW-0030">Aminoacyl-tRNA synthetase</keyword>
<keyword id="KW-0067">ATP-binding</keyword>
<keyword id="KW-0963">Cytoplasm</keyword>
<keyword id="KW-0436">Ligase</keyword>
<keyword id="KW-0479">Metal-binding</keyword>
<keyword id="KW-0547">Nucleotide-binding</keyword>
<keyword id="KW-0648">Protein biosynthesis</keyword>
<keyword id="KW-0862">Zinc</keyword>
<evidence type="ECO:0000255" key="1">
    <source>
        <dbReference type="HAMAP-Rule" id="MF_00022"/>
    </source>
</evidence>
<gene>
    <name evidence="1" type="primary">gltX</name>
    <name type="ordered locus">SPA0446</name>
</gene>